<gene>
    <name type="primary">ytgA</name>
    <name type="ordered locus">STY4811</name>
    <name type="ordered locus">t4507</name>
</gene>
<dbReference type="EMBL" id="AL513382">
    <property type="protein sequence ID" value="CAD06933.1"/>
    <property type="molecule type" value="Genomic_DNA"/>
</dbReference>
<dbReference type="EMBL" id="AE014613">
    <property type="protein sequence ID" value="AAO71954.1"/>
    <property type="molecule type" value="Genomic_DNA"/>
</dbReference>
<dbReference type="RefSeq" id="NP_458890.1">
    <property type="nucleotide sequence ID" value="NC_003198.1"/>
</dbReference>
<dbReference type="RefSeq" id="WP_000826193.1">
    <property type="nucleotide sequence ID" value="NZ_WSUR01000016.1"/>
</dbReference>
<dbReference type="STRING" id="220341.gene:17588633"/>
<dbReference type="KEGG" id="stt:t4507"/>
<dbReference type="KEGG" id="sty:STY4811"/>
<dbReference type="PATRIC" id="fig|220341.7.peg.4920"/>
<dbReference type="eggNOG" id="ENOG5033ZBS">
    <property type="taxonomic scope" value="Bacteria"/>
</dbReference>
<dbReference type="HOGENOM" id="CLU_1719780_0_0_6"/>
<dbReference type="OMA" id="GSHSAMA"/>
<dbReference type="OrthoDB" id="6630729at2"/>
<dbReference type="Proteomes" id="UP000000541">
    <property type="component" value="Chromosome"/>
</dbReference>
<dbReference type="Proteomes" id="UP000002670">
    <property type="component" value="Chromosome"/>
</dbReference>
<dbReference type="InterPro" id="IPR022061">
    <property type="entry name" value="DUF3617"/>
</dbReference>
<dbReference type="Pfam" id="PF12276">
    <property type="entry name" value="DUF3617"/>
    <property type="match status" value="1"/>
</dbReference>
<organism>
    <name type="scientific">Salmonella typhi</name>
    <dbReference type="NCBI Taxonomy" id="90370"/>
    <lineage>
        <taxon>Bacteria</taxon>
        <taxon>Pseudomonadati</taxon>
        <taxon>Pseudomonadota</taxon>
        <taxon>Gammaproteobacteria</taxon>
        <taxon>Enterobacterales</taxon>
        <taxon>Enterobacteriaceae</taxon>
        <taxon>Salmonella</taxon>
    </lineage>
</organism>
<sequence length="162" mass="17771">MKRLLSAIVFPAMFISISNVYALDIQPGEWKMENIEMRTINPDTKEVLMDEKNSGIATLMCYTPKMSEDSKKMVKGFSTSAGGCTTTFVESTDTKLINETVCNNPDVKSHSIVETTKISDTEFAMTMKSDVDAGGNKTTSINKIKQTFVGKTCSEASKGVKQ</sequence>
<accession>P0A1V1</accession>
<accession>Q08020</accession>
<name>YTGA_SALTI</name>
<reference key="1">
    <citation type="journal article" date="2001" name="Nature">
        <title>Complete genome sequence of a multiple drug resistant Salmonella enterica serovar Typhi CT18.</title>
        <authorList>
            <person name="Parkhill J."/>
            <person name="Dougan G."/>
            <person name="James K.D."/>
            <person name="Thomson N.R."/>
            <person name="Pickard D."/>
            <person name="Wain J."/>
            <person name="Churcher C.M."/>
            <person name="Mungall K.L."/>
            <person name="Bentley S.D."/>
            <person name="Holden M.T.G."/>
            <person name="Sebaihia M."/>
            <person name="Baker S."/>
            <person name="Basham D."/>
            <person name="Brooks K."/>
            <person name="Chillingworth T."/>
            <person name="Connerton P."/>
            <person name="Cronin A."/>
            <person name="Davis P."/>
            <person name="Davies R.M."/>
            <person name="Dowd L."/>
            <person name="White N."/>
            <person name="Farrar J."/>
            <person name="Feltwell T."/>
            <person name="Hamlin N."/>
            <person name="Haque A."/>
            <person name="Hien T.T."/>
            <person name="Holroyd S."/>
            <person name="Jagels K."/>
            <person name="Krogh A."/>
            <person name="Larsen T.S."/>
            <person name="Leather S."/>
            <person name="Moule S."/>
            <person name="O'Gaora P."/>
            <person name="Parry C."/>
            <person name="Quail M.A."/>
            <person name="Rutherford K.M."/>
            <person name="Simmonds M."/>
            <person name="Skelton J."/>
            <person name="Stevens K."/>
            <person name="Whitehead S."/>
            <person name="Barrell B.G."/>
        </authorList>
    </citation>
    <scope>NUCLEOTIDE SEQUENCE [LARGE SCALE GENOMIC DNA]</scope>
    <source>
        <strain>CT18</strain>
    </source>
</reference>
<reference key="2">
    <citation type="journal article" date="2003" name="J. Bacteriol.">
        <title>Comparative genomics of Salmonella enterica serovar Typhi strains Ty2 and CT18.</title>
        <authorList>
            <person name="Deng W."/>
            <person name="Liou S.-R."/>
            <person name="Plunkett G. III"/>
            <person name="Mayhew G.F."/>
            <person name="Rose D.J."/>
            <person name="Burland V."/>
            <person name="Kodoyianni V."/>
            <person name="Schwartz D.C."/>
            <person name="Blattner F.R."/>
        </authorList>
    </citation>
    <scope>NUCLEOTIDE SEQUENCE [LARGE SCALE GENOMIC DNA]</scope>
    <source>
        <strain>ATCC 700931 / Ty2</strain>
    </source>
</reference>
<feature type="chain" id="PRO_0000205374" description="Uncharacterized protein YtgA">
    <location>
        <begin position="1"/>
        <end position="162"/>
    </location>
</feature>
<protein>
    <recommendedName>
        <fullName>Uncharacterized protein YtgA</fullName>
    </recommendedName>
</protein>
<proteinExistence type="predicted"/>